<gene>
    <name evidence="1" type="primary">mraY</name>
    <name type="ordered locus">Tpet_0689</name>
</gene>
<dbReference type="EC" id="2.7.8.13" evidence="1"/>
<dbReference type="EMBL" id="CP000702">
    <property type="protein sequence ID" value="ABQ46709.1"/>
    <property type="molecule type" value="Genomic_DNA"/>
</dbReference>
<dbReference type="RefSeq" id="WP_011943294.1">
    <property type="nucleotide sequence ID" value="NC_009486.1"/>
</dbReference>
<dbReference type="SMR" id="A5IKI6"/>
<dbReference type="STRING" id="390874.Tpet_0689"/>
<dbReference type="KEGG" id="tpt:Tpet_0689"/>
<dbReference type="eggNOG" id="COG0472">
    <property type="taxonomic scope" value="Bacteria"/>
</dbReference>
<dbReference type="HOGENOM" id="CLU_023982_0_1_0"/>
<dbReference type="UniPathway" id="UPA00219"/>
<dbReference type="Proteomes" id="UP000006558">
    <property type="component" value="Chromosome"/>
</dbReference>
<dbReference type="GO" id="GO:0005886">
    <property type="term" value="C:plasma membrane"/>
    <property type="evidence" value="ECO:0007669"/>
    <property type="project" value="UniProtKB-SubCell"/>
</dbReference>
<dbReference type="GO" id="GO:0046872">
    <property type="term" value="F:metal ion binding"/>
    <property type="evidence" value="ECO:0007669"/>
    <property type="project" value="UniProtKB-KW"/>
</dbReference>
<dbReference type="GO" id="GO:0008963">
    <property type="term" value="F:phospho-N-acetylmuramoyl-pentapeptide-transferase activity"/>
    <property type="evidence" value="ECO:0007669"/>
    <property type="project" value="UniProtKB-UniRule"/>
</dbReference>
<dbReference type="GO" id="GO:0051992">
    <property type="term" value="F:UDP-N-acetylmuramoyl-L-alanyl-D-glutamyl-meso-2,6-diaminopimelyl-D-alanyl-D-alanine:undecaprenyl-phosphate transferase activity"/>
    <property type="evidence" value="ECO:0007669"/>
    <property type="project" value="RHEA"/>
</dbReference>
<dbReference type="GO" id="GO:0051301">
    <property type="term" value="P:cell division"/>
    <property type="evidence" value="ECO:0007669"/>
    <property type="project" value="UniProtKB-KW"/>
</dbReference>
<dbReference type="GO" id="GO:0071555">
    <property type="term" value="P:cell wall organization"/>
    <property type="evidence" value="ECO:0007669"/>
    <property type="project" value="UniProtKB-KW"/>
</dbReference>
<dbReference type="GO" id="GO:0009252">
    <property type="term" value="P:peptidoglycan biosynthetic process"/>
    <property type="evidence" value="ECO:0007669"/>
    <property type="project" value="UniProtKB-UniRule"/>
</dbReference>
<dbReference type="GO" id="GO:0008360">
    <property type="term" value="P:regulation of cell shape"/>
    <property type="evidence" value="ECO:0007669"/>
    <property type="project" value="UniProtKB-KW"/>
</dbReference>
<dbReference type="CDD" id="cd06852">
    <property type="entry name" value="GT_MraY"/>
    <property type="match status" value="1"/>
</dbReference>
<dbReference type="HAMAP" id="MF_00038">
    <property type="entry name" value="MraY"/>
    <property type="match status" value="1"/>
</dbReference>
<dbReference type="InterPro" id="IPR000715">
    <property type="entry name" value="Glycosyl_transferase_4"/>
</dbReference>
<dbReference type="InterPro" id="IPR003524">
    <property type="entry name" value="PNAcMuramoyl-5peptid_Trfase"/>
</dbReference>
<dbReference type="InterPro" id="IPR018480">
    <property type="entry name" value="PNAcMuramoyl-5peptid_Trfase_CS"/>
</dbReference>
<dbReference type="NCBIfam" id="TIGR00445">
    <property type="entry name" value="mraY"/>
    <property type="match status" value="1"/>
</dbReference>
<dbReference type="PANTHER" id="PTHR22926">
    <property type="entry name" value="PHOSPHO-N-ACETYLMURAMOYL-PENTAPEPTIDE-TRANSFERASE"/>
    <property type="match status" value="1"/>
</dbReference>
<dbReference type="PANTHER" id="PTHR22926:SF5">
    <property type="entry name" value="PHOSPHO-N-ACETYLMURAMOYL-PENTAPEPTIDE-TRANSFERASE HOMOLOG"/>
    <property type="match status" value="1"/>
</dbReference>
<dbReference type="Pfam" id="PF00953">
    <property type="entry name" value="Glycos_transf_4"/>
    <property type="match status" value="1"/>
</dbReference>
<dbReference type="Pfam" id="PF10555">
    <property type="entry name" value="MraY_sig1"/>
    <property type="match status" value="1"/>
</dbReference>
<dbReference type="PROSITE" id="PS01347">
    <property type="entry name" value="MRAY_1"/>
    <property type="match status" value="1"/>
</dbReference>
<dbReference type="PROSITE" id="PS01348">
    <property type="entry name" value="MRAY_2"/>
    <property type="match status" value="1"/>
</dbReference>
<organism>
    <name type="scientific">Thermotoga petrophila (strain ATCC BAA-488 / DSM 13995 / JCM 10881 / RKU-1)</name>
    <dbReference type="NCBI Taxonomy" id="390874"/>
    <lineage>
        <taxon>Bacteria</taxon>
        <taxon>Thermotogati</taxon>
        <taxon>Thermotogota</taxon>
        <taxon>Thermotogae</taxon>
        <taxon>Thermotogales</taxon>
        <taxon>Thermotogaceae</taxon>
        <taxon>Thermotoga</taxon>
    </lineage>
</organism>
<accession>A5IKI6</accession>
<sequence length="302" mass="33910">MIAANFLLNLFLYPILIKLFRRRRIGQYIRKEGPDLHGYKEGTPTMGGILFVLTGFLFGMISKTTTMVLLGMFLFFLIGFLDDFLSVVRKDSTGLKTYQKALLQTLSALIMLLLIRPETNVDFFGFTIEMGKWYYLFALLVIVGSSNAMNLTDGLDGLAGWIYVSGSIPYWFFLKERGVSEDILLILGAGVLAFLVFNSKPAKIFMGDTGSITLGGVLGTVSVLTKTEFYLVLFFLIPVIETLSVILQVGSFKIFKRRIFRMSPLHHHFELIGWSEEKIVAVFTVFNLISSLVVLEIFGVIA</sequence>
<proteinExistence type="inferred from homology"/>
<comment type="function">
    <text evidence="1">Catalyzes the initial step of the lipid cycle reactions in the biosynthesis of the cell wall peptidoglycan: transfers peptidoglycan precursor phospho-MurNAc-pentapeptide from UDP-MurNAc-pentapeptide onto the lipid carrier undecaprenyl phosphate, yielding undecaprenyl-pyrophosphoryl-MurNAc-pentapeptide, known as lipid I.</text>
</comment>
<comment type="catalytic activity">
    <reaction evidence="1">
        <text>UDP-N-acetyl-alpha-D-muramoyl-L-alanyl-gamma-D-glutamyl-meso-2,6-diaminopimeloyl-D-alanyl-D-alanine + di-trans,octa-cis-undecaprenyl phosphate = di-trans,octa-cis-undecaprenyl diphospho-N-acetyl-alpha-D-muramoyl-L-alanyl-D-glutamyl-meso-2,6-diaminopimeloyl-D-alanyl-D-alanine + UMP</text>
        <dbReference type="Rhea" id="RHEA:28386"/>
        <dbReference type="ChEBI" id="CHEBI:57865"/>
        <dbReference type="ChEBI" id="CHEBI:60392"/>
        <dbReference type="ChEBI" id="CHEBI:61386"/>
        <dbReference type="ChEBI" id="CHEBI:61387"/>
        <dbReference type="EC" id="2.7.8.13"/>
    </reaction>
</comment>
<comment type="cofactor">
    <cofactor evidence="1">
        <name>Mg(2+)</name>
        <dbReference type="ChEBI" id="CHEBI:18420"/>
    </cofactor>
</comment>
<comment type="pathway">
    <text evidence="1">Cell wall biogenesis; peptidoglycan biosynthesis.</text>
</comment>
<comment type="subcellular location">
    <subcellularLocation>
        <location evidence="1">Cell inner membrane</location>
        <topology evidence="1">Multi-pass membrane protein</topology>
    </subcellularLocation>
</comment>
<comment type="similarity">
    <text evidence="1">Belongs to the glycosyltransferase 4 family. MraY subfamily.</text>
</comment>
<protein>
    <recommendedName>
        <fullName evidence="1">Phospho-N-acetylmuramoyl-pentapeptide-transferase</fullName>
        <ecNumber evidence="1">2.7.8.13</ecNumber>
    </recommendedName>
    <alternativeName>
        <fullName evidence="1">UDP-MurNAc-pentapeptide phosphotransferase</fullName>
    </alternativeName>
</protein>
<reference key="1">
    <citation type="submission" date="2007-05" db="EMBL/GenBank/DDBJ databases">
        <title>Complete sequence of Thermotoga petrophila RKU-1.</title>
        <authorList>
            <consortium name="US DOE Joint Genome Institute"/>
            <person name="Copeland A."/>
            <person name="Lucas S."/>
            <person name="Lapidus A."/>
            <person name="Barry K."/>
            <person name="Glavina del Rio T."/>
            <person name="Dalin E."/>
            <person name="Tice H."/>
            <person name="Pitluck S."/>
            <person name="Sims D."/>
            <person name="Brettin T."/>
            <person name="Bruce D."/>
            <person name="Detter J.C."/>
            <person name="Han C."/>
            <person name="Tapia R."/>
            <person name="Schmutz J."/>
            <person name="Larimer F."/>
            <person name="Land M."/>
            <person name="Hauser L."/>
            <person name="Kyrpides N."/>
            <person name="Mikhailova N."/>
            <person name="Nelson K."/>
            <person name="Gogarten J.P."/>
            <person name="Noll K."/>
            <person name="Richardson P."/>
        </authorList>
    </citation>
    <scope>NUCLEOTIDE SEQUENCE [LARGE SCALE GENOMIC DNA]</scope>
    <source>
        <strain>ATCC BAA-488 / DSM 13995 / JCM 10881 / RKU-1</strain>
    </source>
</reference>
<feature type="chain" id="PRO_1000003083" description="Phospho-N-acetylmuramoyl-pentapeptide-transferase">
    <location>
        <begin position="1"/>
        <end position="302"/>
    </location>
</feature>
<feature type="transmembrane region" description="Helical" evidence="1">
    <location>
        <begin position="1"/>
        <end position="21"/>
    </location>
</feature>
<feature type="transmembrane region" description="Helical" evidence="1">
    <location>
        <begin position="42"/>
        <end position="62"/>
    </location>
</feature>
<feature type="transmembrane region" description="Helical" evidence="1">
    <location>
        <begin position="68"/>
        <end position="88"/>
    </location>
</feature>
<feature type="transmembrane region" description="Helical" evidence="1">
    <location>
        <begin position="123"/>
        <end position="143"/>
    </location>
</feature>
<feature type="transmembrane region" description="Helical" evidence="1">
    <location>
        <begin position="154"/>
        <end position="174"/>
    </location>
</feature>
<feature type="transmembrane region" description="Helical" evidence="1">
    <location>
        <begin position="178"/>
        <end position="198"/>
    </location>
</feature>
<feature type="transmembrane region" description="Helical" evidence="1">
    <location>
        <begin position="204"/>
        <end position="224"/>
    </location>
</feature>
<feature type="transmembrane region" description="Helical" evidence="1">
    <location>
        <begin position="229"/>
        <end position="249"/>
    </location>
</feature>
<feature type="transmembrane region" description="Helical" evidence="1">
    <location>
        <begin position="279"/>
        <end position="299"/>
    </location>
</feature>
<evidence type="ECO:0000255" key="1">
    <source>
        <dbReference type="HAMAP-Rule" id="MF_00038"/>
    </source>
</evidence>
<name>MRAY_THEP1</name>
<keyword id="KW-0131">Cell cycle</keyword>
<keyword id="KW-0132">Cell division</keyword>
<keyword id="KW-0997">Cell inner membrane</keyword>
<keyword id="KW-1003">Cell membrane</keyword>
<keyword id="KW-0133">Cell shape</keyword>
<keyword id="KW-0961">Cell wall biogenesis/degradation</keyword>
<keyword id="KW-0460">Magnesium</keyword>
<keyword id="KW-0472">Membrane</keyword>
<keyword id="KW-0479">Metal-binding</keyword>
<keyword id="KW-0573">Peptidoglycan synthesis</keyword>
<keyword id="KW-0808">Transferase</keyword>
<keyword id="KW-0812">Transmembrane</keyword>
<keyword id="KW-1133">Transmembrane helix</keyword>